<sequence length="282" mass="30890">MKLAVFTDSSAYLSAETLQREDLFVLDIPVNIDGEEYVEGINLSAEEFYQKMAQASELPKTSQPSIAKLDEILTSLKEQGYTHALGLFLSSGISGFYQSIQYMVDDYEGLTIAFPDTLITSAPLGIMVESVFNWRDQGDDFASIQDKLAIQISRTSAFIMVDDLDHLVKGGRLSNGAAILGNLLSIKPILYFNDQGVIEVYEKVRTEKKATKRLIEIIKETTASGQYRVIVIHGNAPEKAEELRQHLLDFGLGSDVSLATFGSVIGTHLGAGSIALGYIPVI</sequence>
<dbReference type="EMBL" id="AE007317">
    <property type="protein sequence ID" value="AAL00219.1"/>
    <property type="molecule type" value="Genomic_DNA"/>
</dbReference>
<dbReference type="PIR" id="F98048">
    <property type="entry name" value="F98048"/>
</dbReference>
<dbReference type="RefSeq" id="NP_359008.1">
    <property type="nucleotide sequence ID" value="NC_003098.1"/>
</dbReference>
<dbReference type="RefSeq" id="WP_000762066.1">
    <property type="nucleotide sequence ID" value="NC_003098.1"/>
</dbReference>
<dbReference type="PDB" id="6DKE">
    <property type="method" value="X-ray"/>
    <property type="resolution" value="1.76 A"/>
    <property type="chains" value="A=1-282"/>
</dbReference>
<dbReference type="PDB" id="6NOK">
    <property type="method" value="X-ray"/>
    <property type="resolution" value="1.69 A"/>
    <property type="chains" value="A=1-282"/>
</dbReference>
<dbReference type="PDBsum" id="6DKE"/>
<dbReference type="PDBsum" id="6NOK"/>
<dbReference type="SMR" id="Q8DP17"/>
<dbReference type="STRING" id="171101.spr1415"/>
<dbReference type="KEGG" id="spr:spr1415"/>
<dbReference type="PATRIC" id="fig|171101.6.peg.1531"/>
<dbReference type="eggNOG" id="COG1307">
    <property type="taxonomic scope" value="Bacteria"/>
</dbReference>
<dbReference type="HOGENOM" id="CLU_048251_3_1_9"/>
<dbReference type="Proteomes" id="UP000000586">
    <property type="component" value="Chromosome"/>
</dbReference>
<dbReference type="GO" id="GO:0008289">
    <property type="term" value="F:lipid binding"/>
    <property type="evidence" value="ECO:0007669"/>
    <property type="project" value="UniProtKB-KW"/>
</dbReference>
<dbReference type="Gene3D" id="3.30.1180.10">
    <property type="match status" value="1"/>
</dbReference>
<dbReference type="Gene3D" id="3.40.50.10170">
    <property type="match status" value="1"/>
</dbReference>
<dbReference type="InterPro" id="IPR003797">
    <property type="entry name" value="DegV"/>
</dbReference>
<dbReference type="InterPro" id="IPR043168">
    <property type="entry name" value="DegV_C"/>
</dbReference>
<dbReference type="InterPro" id="IPR050270">
    <property type="entry name" value="DegV_domain_contain"/>
</dbReference>
<dbReference type="NCBIfam" id="TIGR00762">
    <property type="entry name" value="DegV"/>
    <property type="match status" value="1"/>
</dbReference>
<dbReference type="PANTHER" id="PTHR33434">
    <property type="entry name" value="DEGV DOMAIN-CONTAINING PROTEIN DR_1986-RELATED"/>
    <property type="match status" value="1"/>
</dbReference>
<dbReference type="PANTHER" id="PTHR33434:SF2">
    <property type="entry name" value="FATTY ACID-BINDING PROTEIN TM_1468"/>
    <property type="match status" value="1"/>
</dbReference>
<dbReference type="Pfam" id="PF02645">
    <property type="entry name" value="DegV"/>
    <property type="match status" value="1"/>
</dbReference>
<dbReference type="SUPFAM" id="SSF82549">
    <property type="entry name" value="DAK1/DegV-like"/>
    <property type="match status" value="1"/>
</dbReference>
<dbReference type="PROSITE" id="PS51482">
    <property type="entry name" value="DEGV"/>
    <property type="match status" value="1"/>
</dbReference>
<accession>Q8DP17</accession>
<name>Y1415_STRR6</name>
<evidence type="ECO:0000250" key="1"/>
<evidence type="ECO:0000250" key="2">
    <source>
        <dbReference type="UniProtKB" id="Q9X1H9"/>
    </source>
</evidence>
<evidence type="ECO:0000255" key="3">
    <source>
        <dbReference type="PROSITE-ProRule" id="PRU00815"/>
    </source>
</evidence>
<evidence type="ECO:0007829" key="4">
    <source>
        <dbReference type="PDB" id="6NOK"/>
    </source>
</evidence>
<feature type="chain" id="PRO_0000209799" description="DegV domain-containing protein spr1415">
    <location>
        <begin position="1"/>
        <end position="282"/>
    </location>
</feature>
<feature type="domain" description="DegV" evidence="3">
    <location>
        <begin position="3"/>
        <end position="280"/>
    </location>
</feature>
<feature type="binding site" evidence="2">
    <location>
        <position position="61"/>
    </location>
    <ligand>
        <name>hexadecanoate</name>
        <dbReference type="ChEBI" id="CHEBI:7896"/>
    </ligand>
</feature>
<feature type="binding site" evidence="2">
    <location>
        <position position="94"/>
    </location>
    <ligand>
        <name>hexadecanoate</name>
        <dbReference type="ChEBI" id="CHEBI:7896"/>
    </ligand>
</feature>
<feature type="strand" evidence="4">
    <location>
        <begin position="3"/>
        <end position="8"/>
    </location>
</feature>
<feature type="helix" evidence="4">
    <location>
        <begin position="17"/>
        <end position="19"/>
    </location>
</feature>
<feature type="strand" evidence="4">
    <location>
        <begin position="23"/>
        <end position="26"/>
    </location>
</feature>
<feature type="strand" evidence="4">
    <location>
        <begin position="30"/>
        <end position="32"/>
    </location>
</feature>
<feature type="strand" evidence="4">
    <location>
        <begin position="35"/>
        <end position="37"/>
    </location>
</feature>
<feature type="turn" evidence="4">
    <location>
        <begin position="39"/>
        <end position="41"/>
    </location>
</feature>
<feature type="helix" evidence="4">
    <location>
        <begin position="45"/>
        <end position="47"/>
    </location>
</feature>
<feature type="helix" evidence="4">
    <location>
        <begin position="48"/>
        <end position="54"/>
    </location>
</feature>
<feature type="helix" evidence="4">
    <location>
        <begin position="66"/>
        <end position="78"/>
    </location>
</feature>
<feature type="strand" evidence="4">
    <location>
        <begin position="83"/>
        <end position="87"/>
    </location>
</feature>
<feature type="turn" evidence="4">
    <location>
        <begin position="91"/>
        <end position="93"/>
    </location>
</feature>
<feature type="helix" evidence="4">
    <location>
        <begin position="96"/>
        <end position="100"/>
    </location>
</feature>
<feature type="helix" evidence="4">
    <location>
        <begin position="101"/>
        <end position="105"/>
    </location>
</feature>
<feature type="strand" evidence="4">
    <location>
        <begin position="111"/>
        <end position="113"/>
    </location>
</feature>
<feature type="helix" evidence="4">
    <location>
        <begin position="121"/>
        <end position="136"/>
    </location>
</feature>
<feature type="helix" evidence="4">
    <location>
        <begin position="141"/>
        <end position="153"/>
    </location>
</feature>
<feature type="strand" evidence="4">
    <location>
        <begin position="156"/>
        <end position="160"/>
    </location>
</feature>
<feature type="helix" evidence="4">
    <location>
        <begin position="165"/>
        <end position="169"/>
    </location>
</feature>
<feature type="helix" evidence="4">
    <location>
        <begin position="176"/>
        <end position="179"/>
    </location>
</feature>
<feature type="strand" evidence="4">
    <location>
        <begin position="183"/>
        <end position="185"/>
    </location>
</feature>
<feature type="strand" evidence="4">
    <location>
        <begin position="189"/>
        <end position="192"/>
    </location>
</feature>
<feature type="strand" evidence="4">
    <location>
        <begin position="198"/>
        <end position="202"/>
    </location>
</feature>
<feature type="helix" evidence="4">
    <location>
        <begin position="207"/>
        <end position="221"/>
    </location>
</feature>
<feature type="strand" evidence="4">
    <location>
        <begin position="223"/>
        <end position="225"/>
    </location>
</feature>
<feature type="strand" evidence="4">
    <location>
        <begin position="227"/>
        <end position="235"/>
    </location>
</feature>
<feature type="helix" evidence="4">
    <location>
        <begin position="237"/>
        <end position="250"/>
    </location>
</feature>
<feature type="helix" evidence="4">
    <location>
        <begin position="253"/>
        <end position="255"/>
    </location>
</feature>
<feature type="strand" evidence="4">
    <location>
        <begin position="256"/>
        <end position="260"/>
    </location>
</feature>
<feature type="helix" evidence="4">
    <location>
        <begin position="263"/>
        <end position="269"/>
    </location>
</feature>
<feature type="strand" evidence="4">
    <location>
        <begin position="273"/>
        <end position="280"/>
    </location>
</feature>
<reference key="1">
    <citation type="journal article" date="2001" name="J. Bacteriol.">
        <title>Genome of the bacterium Streptococcus pneumoniae strain R6.</title>
        <authorList>
            <person name="Hoskins J."/>
            <person name="Alborn W.E. Jr."/>
            <person name="Arnold J."/>
            <person name="Blaszczak L.C."/>
            <person name="Burgett S."/>
            <person name="DeHoff B.S."/>
            <person name="Estrem S.T."/>
            <person name="Fritz L."/>
            <person name="Fu D.-J."/>
            <person name="Fuller W."/>
            <person name="Geringer C."/>
            <person name="Gilmour R."/>
            <person name="Glass J.S."/>
            <person name="Khoja H."/>
            <person name="Kraft A.R."/>
            <person name="Lagace R.E."/>
            <person name="LeBlanc D.J."/>
            <person name="Lee L.N."/>
            <person name="Lefkowitz E.J."/>
            <person name="Lu J."/>
            <person name="Matsushima P."/>
            <person name="McAhren S.M."/>
            <person name="McHenney M."/>
            <person name="McLeaster K."/>
            <person name="Mundy C.W."/>
            <person name="Nicas T.I."/>
            <person name="Norris F.H."/>
            <person name="O'Gara M."/>
            <person name="Peery R.B."/>
            <person name="Robertson G.T."/>
            <person name="Rockey P."/>
            <person name="Sun P.-M."/>
            <person name="Winkler M.E."/>
            <person name="Yang Y."/>
            <person name="Young-Bellido M."/>
            <person name="Zhao G."/>
            <person name="Zook C.A."/>
            <person name="Baltz R.H."/>
            <person name="Jaskunas S.R."/>
            <person name="Rosteck P.R. Jr."/>
            <person name="Skatrud P.L."/>
            <person name="Glass J.I."/>
        </authorList>
    </citation>
    <scope>NUCLEOTIDE SEQUENCE [LARGE SCALE GENOMIC DNA]</scope>
    <source>
        <strain>ATCC BAA-255 / R6</strain>
    </source>
</reference>
<organism>
    <name type="scientific">Streptococcus pneumoniae (strain ATCC BAA-255 / R6)</name>
    <dbReference type="NCBI Taxonomy" id="171101"/>
    <lineage>
        <taxon>Bacteria</taxon>
        <taxon>Bacillati</taxon>
        <taxon>Bacillota</taxon>
        <taxon>Bacilli</taxon>
        <taxon>Lactobacillales</taxon>
        <taxon>Streptococcaceae</taxon>
        <taxon>Streptococcus</taxon>
    </lineage>
</organism>
<comment type="function">
    <text evidence="1">May bind long-chain fatty acids, such as palmitate, and may play a role in lipid transport or fatty acid metabolism.</text>
</comment>
<proteinExistence type="evidence at protein level"/>
<keyword id="KW-0002">3D-structure</keyword>
<keyword id="KW-0446">Lipid-binding</keyword>
<keyword id="KW-1185">Reference proteome</keyword>
<protein>
    <recommendedName>
        <fullName>DegV domain-containing protein spr1415</fullName>
    </recommendedName>
</protein>
<gene>
    <name type="ordered locus">spr1415</name>
</gene>